<reference key="1">
    <citation type="journal article" date="2011" name="Cell">
        <title>Insight into structure and assembly of the nuclear pore complex by utilizing the genome of a eukaryotic thermophile.</title>
        <authorList>
            <person name="Amlacher S."/>
            <person name="Sarges P."/>
            <person name="Flemming D."/>
            <person name="van Noort V."/>
            <person name="Kunze R."/>
            <person name="Devos D.P."/>
            <person name="Arumugam M."/>
            <person name="Bork P."/>
            <person name="Hurt E."/>
        </authorList>
    </citation>
    <scope>NUCLEOTIDE SEQUENCE [LARGE SCALE GENOMIC DNA]</scope>
    <source>
        <strain>DSM 1495 / CBS 144.50 / IMI 039719</strain>
    </source>
</reference>
<sequence>MSLFGTNTTSQTPAGGGLFGTTTSQSAQTGSLFGTATSQPQQTGGLFGSTATQTPSSQLQSTGLFGSTTATSQPQQTGGLFGSTTTTTSQPQQTGGLFGATATSQPQSTGGLFGNTTTTSQPAQTVGLFGTTTQPQPAQSGGLFGSATQQKPATGGLFGSTTTNTGAGLFGNTSNTIGGGGLFGQTAKPATGGLFGQSTTQPQQQQNATPGLTMGQSTNTQQQVVPGVRIDLSNIKSTTRFNDLTEALQQEIAKIDEEIQKCIRDKEAVDAFLPAHGEQLAAIPTDVNFVTRKSEGAHNALSSDILAIDQLRELVKQDADNARLSFKAIDNLKLPMQYHQAGLWSKQMGGAGTAGASGASADADGQSNADLISYFSKTADEMEEMMKKFEKTITEIEAHLTGVEAHAMAMQNVAAQSRNAAQGGVDERVYELAAVLREFEESILKVAGVVGGVKEGVTELQLRDFMGHGS</sequence>
<gene>
    <name type="primary">NUP49</name>
    <name type="ORF">CTHT_0031980</name>
</gene>
<evidence type="ECO:0000250" key="1">
    <source>
        <dbReference type="UniProtKB" id="Q02199"/>
    </source>
</evidence>
<evidence type="ECO:0000255" key="2"/>
<evidence type="ECO:0000256" key="3">
    <source>
        <dbReference type="SAM" id="MobiDB-lite"/>
    </source>
</evidence>
<evidence type="ECO:0000303" key="4">
    <source>
    </source>
</evidence>
<evidence type="ECO:0000305" key="5"/>
<evidence type="ECO:0000305" key="6">
    <source>
    </source>
</evidence>
<proteinExistence type="evidence at protein level"/>
<comment type="function">
    <text evidence="1">Functions as a component of the nuclear pore complex (NPC). NPC components, collectively referred to as nucleoporins (NUPs), can play the role of both NPC structural components and of docking or interaction partners for transiently associated nuclear transport factors. Active directional transport is assured by both, a Phe-Gly (FG) repeat affinity gradient for these transport factors across the NPC and a transport cofactor concentration gradient across the nuclear envelope (GSP1 and GSP2 GTPases associated predominantly with GTP in the nucleus, with GDP in the cytoplasm). NUP49 plays an important role in several nuclear transport pathways including poly(A)+ RNA, tRNA, and pre-ribosome transport.</text>
</comment>
<comment type="subunit">
    <text evidence="1 6">Component of the nuclear pore complex (NPC). NPC constitutes the exclusive means of nucleocytoplasmic transport. NPCs allow the passive diffusion of ions and small molecules and the active, nuclear transport receptor-mediated bidirectional transport of macromolecules such as proteins, RNAs, ribonucleoparticles (RNPs), and ribosomal subunits across the nuclear envelope. Due to its 8-fold rotational symmetry, all subunits are present with 8 copies or multiples thereof.</text>
</comment>
<comment type="subcellular location">
    <subcellularLocation>
        <location evidence="1">Nucleus</location>
        <location evidence="1">Nuclear pore complex</location>
    </subcellularLocation>
    <subcellularLocation>
        <location evidence="1">Nucleus membrane</location>
        <topology evidence="1">Peripheral membrane protein</topology>
        <orientation evidence="1">Cytoplasmic side</orientation>
    </subcellularLocation>
    <subcellularLocation>
        <location evidence="1">Nucleus membrane</location>
        <topology evidence="1">Peripheral membrane protein</topology>
        <orientation evidence="1">Nucleoplasmic side</orientation>
    </subcellularLocation>
    <text evidence="1">Symmetric distribution.</text>
</comment>
<comment type="domain">
    <text evidence="1">Contains FG repeats. FG repeats are interaction sites for karyopherins (importins, exportins) and form probably an affinity gradient, guiding the transport proteins unidirectionally with their cargo through the NPC. FG repeat regions are highly flexible and lack ordered secondary structure. The overall conservation of FG repeats regarding exact sequence, spacing, and repeat unit length is limited. FG repeat types and their physico-chemical environment change across the NPC from the nucleoplasmic to the cytoplasmic side: GLFG repeats are especially abundant in NUPs in the central region (lacking a charged environment but are enriched in Ser, Thr, Gln, and Asn).</text>
</comment>
<comment type="similarity">
    <text evidence="5">Belongs to the nucleoporin GLFG family.</text>
</comment>
<organism>
    <name type="scientific">Chaetomium thermophilum (strain DSM 1495 / CBS 144.50 / IMI 039719)</name>
    <name type="common">Thermochaetoides thermophila</name>
    <dbReference type="NCBI Taxonomy" id="759272"/>
    <lineage>
        <taxon>Eukaryota</taxon>
        <taxon>Fungi</taxon>
        <taxon>Dikarya</taxon>
        <taxon>Ascomycota</taxon>
        <taxon>Pezizomycotina</taxon>
        <taxon>Sordariomycetes</taxon>
        <taxon>Sordariomycetidae</taxon>
        <taxon>Sordariales</taxon>
        <taxon>Chaetomiaceae</taxon>
        <taxon>Thermochaetoides</taxon>
    </lineage>
</organism>
<accession>G0S4X2</accession>
<accession>G3EQ72</accession>
<name>NUP49_CHATD</name>
<dbReference type="EMBL" id="GL988041">
    <property type="protein sequence ID" value="EGS21343.1"/>
    <property type="molecule type" value="Genomic_DNA"/>
</dbReference>
<dbReference type="EMBL" id="JF276282">
    <property type="protein sequence ID" value="AEN86175.1"/>
    <property type="molecule type" value="Genomic_DNA"/>
</dbReference>
<dbReference type="RefSeq" id="XP_006693639.1">
    <property type="nucleotide sequence ID" value="XM_006693576.1"/>
</dbReference>
<dbReference type="PDB" id="5CWS">
    <property type="method" value="X-ray"/>
    <property type="resolution" value="3.77 A"/>
    <property type="chains" value="D/J=246-470"/>
</dbReference>
<dbReference type="PDBsum" id="5CWS"/>
<dbReference type="SMR" id="G0S4X2"/>
<dbReference type="DIP" id="DIP-61841N"/>
<dbReference type="IntAct" id="G0S4X2">
    <property type="interactions" value="5"/>
</dbReference>
<dbReference type="STRING" id="759272.G0S4X2"/>
<dbReference type="TCDB" id="1.I.1.1.2">
    <property type="family name" value="the nuclear pore complex (npc) family"/>
</dbReference>
<dbReference type="ABCD" id="G0S4X2">
    <property type="antibodies" value="1 sequenced antibody"/>
</dbReference>
<dbReference type="GeneID" id="18257236"/>
<dbReference type="KEGG" id="cthr:CTHT_0031980"/>
<dbReference type="eggNOG" id="KOG0845">
    <property type="taxonomic scope" value="Eukaryota"/>
</dbReference>
<dbReference type="HOGENOM" id="CLU_027081_1_0_1"/>
<dbReference type="OMA" id="KLPTHYH"/>
<dbReference type="OrthoDB" id="2538017at2759"/>
<dbReference type="Proteomes" id="UP000008066">
    <property type="component" value="Unassembled WGS sequence"/>
</dbReference>
<dbReference type="GO" id="GO:0031965">
    <property type="term" value="C:nuclear membrane"/>
    <property type="evidence" value="ECO:0007669"/>
    <property type="project" value="UniProtKB-SubCell"/>
</dbReference>
<dbReference type="GO" id="GO:0005643">
    <property type="term" value="C:nuclear pore"/>
    <property type="evidence" value="ECO:0007669"/>
    <property type="project" value="UniProtKB-SubCell"/>
</dbReference>
<dbReference type="GO" id="GO:0008139">
    <property type="term" value="F:nuclear localization sequence binding"/>
    <property type="evidence" value="ECO:0007669"/>
    <property type="project" value="InterPro"/>
</dbReference>
<dbReference type="GO" id="GO:0017056">
    <property type="term" value="F:structural constituent of nuclear pore"/>
    <property type="evidence" value="ECO:0007669"/>
    <property type="project" value="InterPro"/>
</dbReference>
<dbReference type="GO" id="GO:0051028">
    <property type="term" value="P:mRNA transport"/>
    <property type="evidence" value="ECO:0007669"/>
    <property type="project" value="UniProtKB-KW"/>
</dbReference>
<dbReference type="GO" id="GO:0015031">
    <property type="term" value="P:protein transport"/>
    <property type="evidence" value="ECO:0007669"/>
    <property type="project" value="UniProtKB-KW"/>
</dbReference>
<dbReference type="Gene3D" id="6.10.140.1350">
    <property type="match status" value="1"/>
</dbReference>
<dbReference type="InterPro" id="IPR025574">
    <property type="entry name" value="Nucleoporin_FG_rpt"/>
</dbReference>
<dbReference type="InterPro" id="IPR024882">
    <property type="entry name" value="NUP58/p45/49"/>
</dbReference>
<dbReference type="PANTHER" id="PTHR13437">
    <property type="entry name" value="NUCLEOPORIN P58/P45 NUCLEOPORIN-LIKE PROTEIN 1"/>
    <property type="match status" value="1"/>
</dbReference>
<dbReference type="PANTHER" id="PTHR13437:SF2">
    <property type="entry name" value="NUCLEOPORIN P58_P45"/>
    <property type="match status" value="1"/>
</dbReference>
<dbReference type="Pfam" id="PF13634">
    <property type="entry name" value="Nucleoporin_FG"/>
    <property type="match status" value="1"/>
</dbReference>
<dbReference type="Pfam" id="PF21121">
    <property type="entry name" value="Nup49_C"/>
    <property type="match status" value="1"/>
</dbReference>
<protein>
    <recommendedName>
        <fullName evidence="4">Nucleoporin NUP49</fullName>
    </recommendedName>
    <alternativeName>
        <fullName>Nuclear pore protein NUP49</fullName>
    </alternativeName>
</protein>
<feature type="chain" id="PRO_0000433176" description="Nucleoporin NUP49">
    <location>
        <begin position="1"/>
        <end position="470"/>
    </location>
</feature>
<feature type="repeat" description="GLFG 1">
    <location>
        <begin position="17"/>
        <end position="20"/>
    </location>
</feature>
<feature type="repeat" description="GLFG 2">
    <location>
        <begin position="45"/>
        <end position="48"/>
    </location>
</feature>
<feature type="repeat" description="GLFG 3">
    <location>
        <begin position="63"/>
        <end position="66"/>
    </location>
</feature>
<feature type="repeat" description="GLFG 4">
    <location>
        <begin position="79"/>
        <end position="82"/>
    </location>
</feature>
<feature type="repeat" description="GLFG 5">
    <location>
        <begin position="96"/>
        <end position="99"/>
    </location>
</feature>
<feature type="repeat" description="GLFG 6">
    <location>
        <begin position="111"/>
        <end position="114"/>
    </location>
</feature>
<feature type="repeat" description="GLFG 7">
    <location>
        <begin position="127"/>
        <end position="130"/>
    </location>
</feature>
<feature type="repeat" description="GLFG 8">
    <location>
        <begin position="142"/>
        <end position="145"/>
    </location>
</feature>
<feature type="repeat" description="GLFG 9">
    <location>
        <begin position="156"/>
        <end position="159"/>
    </location>
</feature>
<feature type="repeat" description="GLFG 10">
    <location>
        <begin position="168"/>
        <end position="171"/>
    </location>
</feature>
<feature type="repeat" description="GLFG 11">
    <location>
        <begin position="181"/>
        <end position="184"/>
    </location>
</feature>
<feature type="repeat" description="GLFG 12">
    <location>
        <begin position="193"/>
        <end position="197"/>
    </location>
</feature>
<feature type="region of interest" description="Disordered" evidence="3">
    <location>
        <begin position="1"/>
        <end position="92"/>
    </location>
</feature>
<feature type="region of interest" description="Disordered" evidence="3">
    <location>
        <begin position="196"/>
        <end position="221"/>
    </location>
</feature>
<feature type="coiled-coil region" evidence="2">
    <location>
        <begin position="239"/>
        <end position="270"/>
    </location>
</feature>
<feature type="coiled-coil region" evidence="2">
    <location>
        <begin position="375"/>
        <end position="401"/>
    </location>
</feature>
<feature type="compositionally biased region" description="Polar residues" evidence="3">
    <location>
        <begin position="1"/>
        <end position="13"/>
    </location>
</feature>
<feature type="compositionally biased region" description="Low complexity" evidence="3">
    <location>
        <begin position="20"/>
        <end position="31"/>
    </location>
</feature>
<feature type="compositionally biased region" description="Polar residues" evidence="3">
    <location>
        <begin position="32"/>
        <end position="74"/>
    </location>
</feature>
<feature type="compositionally biased region" description="Low complexity" evidence="3">
    <location>
        <begin position="75"/>
        <end position="92"/>
    </location>
</feature>
<feature type="compositionally biased region" description="Low complexity" evidence="3">
    <location>
        <begin position="197"/>
        <end position="206"/>
    </location>
</feature>
<feature type="compositionally biased region" description="Polar residues" evidence="3">
    <location>
        <begin position="207"/>
        <end position="221"/>
    </location>
</feature>
<keyword id="KW-0002">3D-structure</keyword>
<keyword id="KW-0175">Coiled coil</keyword>
<keyword id="KW-0472">Membrane</keyword>
<keyword id="KW-0509">mRNA transport</keyword>
<keyword id="KW-0906">Nuclear pore complex</keyword>
<keyword id="KW-0539">Nucleus</keyword>
<keyword id="KW-0653">Protein transport</keyword>
<keyword id="KW-1185">Reference proteome</keyword>
<keyword id="KW-0677">Repeat</keyword>
<keyword id="KW-0811">Translocation</keyword>
<keyword id="KW-0813">Transport</keyword>